<comment type="subcellular location">
    <subcellularLocation>
        <location evidence="1">Cell inner membrane</location>
        <topology evidence="1">Multi-pass membrane protein</topology>
    </subcellularLocation>
</comment>
<comment type="similarity">
    <text evidence="1">Belongs to the UPF0283 family.</text>
</comment>
<accession>B7L587</accession>
<reference key="1">
    <citation type="journal article" date="2009" name="PLoS Genet.">
        <title>Organised genome dynamics in the Escherichia coli species results in highly diverse adaptive paths.</title>
        <authorList>
            <person name="Touchon M."/>
            <person name="Hoede C."/>
            <person name="Tenaillon O."/>
            <person name="Barbe V."/>
            <person name="Baeriswyl S."/>
            <person name="Bidet P."/>
            <person name="Bingen E."/>
            <person name="Bonacorsi S."/>
            <person name="Bouchier C."/>
            <person name="Bouvet O."/>
            <person name="Calteau A."/>
            <person name="Chiapello H."/>
            <person name="Clermont O."/>
            <person name="Cruveiller S."/>
            <person name="Danchin A."/>
            <person name="Diard M."/>
            <person name="Dossat C."/>
            <person name="Karoui M.E."/>
            <person name="Frapy E."/>
            <person name="Garry L."/>
            <person name="Ghigo J.M."/>
            <person name="Gilles A.M."/>
            <person name="Johnson J."/>
            <person name="Le Bouguenec C."/>
            <person name="Lescat M."/>
            <person name="Mangenot S."/>
            <person name="Martinez-Jehanne V."/>
            <person name="Matic I."/>
            <person name="Nassif X."/>
            <person name="Oztas S."/>
            <person name="Petit M.A."/>
            <person name="Pichon C."/>
            <person name="Rouy Z."/>
            <person name="Ruf C.S."/>
            <person name="Schneider D."/>
            <person name="Tourret J."/>
            <person name="Vacherie B."/>
            <person name="Vallenet D."/>
            <person name="Medigue C."/>
            <person name="Rocha E.P.C."/>
            <person name="Denamur E."/>
        </authorList>
    </citation>
    <scope>NUCLEOTIDE SEQUENCE [LARGE SCALE GENOMIC DNA]</scope>
    <source>
        <strain>55989 / EAEC</strain>
    </source>
</reference>
<gene>
    <name evidence="1" type="primary">ycjF</name>
    <name type="ordered locus">EC55989_1486</name>
</gene>
<keyword id="KW-0997">Cell inner membrane</keyword>
<keyword id="KW-1003">Cell membrane</keyword>
<keyword id="KW-0472">Membrane</keyword>
<keyword id="KW-1185">Reference proteome</keyword>
<keyword id="KW-0812">Transmembrane</keyword>
<keyword id="KW-1133">Transmembrane helix</keyword>
<evidence type="ECO:0000255" key="1">
    <source>
        <dbReference type="HAMAP-Rule" id="MF_01085"/>
    </source>
</evidence>
<name>YCJF_ECO55</name>
<dbReference type="EMBL" id="CU928145">
    <property type="protein sequence ID" value="CAU97343.1"/>
    <property type="molecule type" value="Genomic_DNA"/>
</dbReference>
<dbReference type="RefSeq" id="WP_000138717.1">
    <property type="nucleotide sequence ID" value="NC_011748.1"/>
</dbReference>
<dbReference type="SMR" id="B7L587"/>
<dbReference type="KEGG" id="eck:EC55989_1486"/>
<dbReference type="HOGENOM" id="CLU_057693_2_0_6"/>
<dbReference type="Proteomes" id="UP000000746">
    <property type="component" value="Chromosome"/>
</dbReference>
<dbReference type="GO" id="GO:0005886">
    <property type="term" value="C:plasma membrane"/>
    <property type="evidence" value="ECO:0007669"/>
    <property type="project" value="UniProtKB-SubCell"/>
</dbReference>
<dbReference type="HAMAP" id="MF_01085">
    <property type="entry name" value="UPF0283"/>
    <property type="match status" value="1"/>
</dbReference>
<dbReference type="InterPro" id="IPR021147">
    <property type="entry name" value="DUF697"/>
</dbReference>
<dbReference type="InterPro" id="IPR006507">
    <property type="entry name" value="UPF0283"/>
</dbReference>
<dbReference type="NCBIfam" id="TIGR01620">
    <property type="entry name" value="hyp_HI0043"/>
    <property type="match status" value="1"/>
</dbReference>
<dbReference type="PANTHER" id="PTHR39342">
    <property type="entry name" value="UPF0283 MEMBRANE PROTEIN YCJF"/>
    <property type="match status" value="1"/>
</dbReference>
<dbReference type="PANTHER" id="PTHR39342:SF1">
    <property type="entry name" value="UPF0283 MEMBRANE PROTEIN YCJF"/>
    <property type="match status" value="1"/>
</dbReference>
<dbReference type="Pfam" id="PF05128">
    <property type="entry name" value="DUF697"/>
    <property type="match status" value="1"/>
</dbReference>
<sequence>MTEPLKPRIDFDGPLEVDQNPKFRAQQTFDENQAQNFAPATLDEAPEEEGQVEAVMDAALRPKRSLWRKMVMGGLALFGASVVGQGVQWTMNAWQTQDWVALGGCAAGALIIGAGVGSVVTEWRRLWRLRQRAHERDEARDLLHSHGTGKGRAFCEKLAQQAGIDQSHPALQRWYASIHETQNDREVVSLYAHLVQPVLDAQARREISRSAAESTLMIAVSPLALVDMAFIAWRNLRLINRIATLYGIELGYYSRLRLFKLVLLNIAFAGASELVREVGMDWMSQDLAARLSTRAAQGIGAGLLTARLGIKAMELCRPLPWIDDDKPRLGDFRRQLIGQVKETLQKGKTPSEK</sequence>
<feature type="chain" id="PRO_1000149859" description="UPF0283 membrane protein YcjF">
    <location>
        <begin position="1"/>
        <end position="353"/>
    </location>
</feature>
<feature type="transmembrane region" description="Helical" evidence="1">
    <location>
        <begin position="70"/>
        <end position="90"/>
    </location>
</feature>
<feature type="transmembrane region" description="Helical" evidence="1">
    <location>
        <begin position="100"/>
        <end position="120"/>
    </location>
</feature>
<feature type="transmembrane region" description="Helical" evidence="1">
    <location>
        <begin position="213"/>
        <end position="233"/>
    </location>
</feature>
<organism>
    <name type="scientific">Escherichia coli (strain 55989 / EAEC)</name>
    <dbReference type="NCBI Taxonomy" id="585055"/>
    <lineage>
        <taxon>Bacteria</taxon>
        <taxon>Pseudomonadati</taxon>
        <taxon>Pseudomonadota</taxon>
        <taxon>Gammaproteobacteria</taxon>
        <taxon>Enterobacterales</taxon>
        <taxon>Enterobacteriaceae</taxon>
        <taxon>Escherichia</taxon>
    </lineage>
</organism>
<protein>
    <recommendedName>
        <fullName evidence="1">UPF0283 membrane protein YcjF</fullName>
    </recommendedName>
</protein>
<proteinExistence type="inferred from homology"/>